<evidence type="ECO:0000255" key="1">
    <source>
        <dbReference type="HAMAP-Rule" id="MF_00189"/>
    </source>
</evidence>
<feature type="chain" id="PRO_1000098901" description="Inner membrane-spanning protein YciB">
    <location>
        <begin position="1"/>
        <end position="180"/>
    </location>
</feature>
<feature type="transmembrane region" description="Helical" evidence="1">
    <location>
        <begin position="22"/>
        <end position="42"/>
    </location>
</feature>
<feature type="transmembrane region" description="Helical" evidence="1">
    <location>
        <begin position="50"/>
        <end position="70"/>
    </location>
</feature>
<feature type="transmembrane region" description="Helical" evidence="1">
    <location>
        <begin position="72"/>
        <end position="92"/>
    </location>
</feature>
<feature type="transmembrane region" description="Helical" evidence="1">
    <location>
        <begin position="121"/>
        <end position="141"/>
    </location>
</feature>
<feature type="transmembrane region" description="Helical" evidence="1">
    <location>
        <begin position="149"/>
        <end position="169"/>
    </location>
</feature>
<reference key="1">
    <citation type="submission" date="2008-04" db="EMBL/GenBank/DDBJ databases">
        <title>Complete sequence of Yersinia pseudotuberculosis PB1/+.</title>
        <authorList>
            <person name="Copeland A."/>
            <person name="Lucas S."/>
            <person name="Lapidus A."/>
            <person name="Glavina del Rio T."/>
            <person name="Dalin E."/>
            <person name="Tice H."/>
            <person name="Bruce D."/>
            <person name="Goodwin L."/>
            <person name="Pitluck S."/>
            <person name="Munk A.C."/>
            <person name="Brettin T."/>
            <person name="Detter J.C."/>
            <person name="Han C."/>
            <person name="Tapia R."/>
            <person name="Schmutz J."/>
            <person name="Larimer F."/>
            <person name="Land M."/>
            <person name="Hauser L."/>
            <person name="Challacombe J.F."/>
            <person name="Green L."/>
            <person name="Lindler L.E."/>
            <person name="Nikolich M.P."/>
            <person name="Richardson P."/>
        </authorList>
    </citation>
    <scope>NUCLEOTIDE SEQUENCE [LARGE SCALE GENOMIC DNA]</scope>
    <source>
        <strain>PB1/+</strain>
    </source>
</reference>
<comment type="function">
    <text evidence="1">Plays a role in cell envelope biogenesis, maintenance of cell envelope integrity and membrane homeostasis.</text>
</comment>
<comment type="subcellular location">
    <subcellularLocation>
        <location evidence="1">Cell inner membrane</location>
        <topology evidence="1">Multi-pass membrane protein</topology>
    </subcellularLocation>
</comment>
<comment type="similarity">
    <text evidence="1">Belongs to the YciB family.</text>
</comment>
<gene>
    <name evidence="1" type="primary">yciB</name>
    <name type="ordered locus">YPTS_2190</name>
</gene>
<proteinExistence type="inferred from homology"/>
<keyword id="KW-0997">Cell inner membrane</keyword>
<keyword id="KW-1003">Cell membrane</keyword>
<keyword id="KW-0472">Membrane</keyword>
<keyword id="KW-0812">Transmembrane</keyword>
<keyword id="KW-1133">Transmembrane helix</keyword>
<organism>
    <name type="scientific">Yersinia pseudotuberculosis serotype IB (strain PB1/+)</name>
    <dbReference type="NCBI Taxonomy" id="502801"/>
    <lineage>
        <taxon>Bacteria</taxon>
        <taxon>Pseudomonadati</taxon>
        <taxon>Pseudomonadota</taxon>
        <taxon>Gammaproteobacteria</taxon>
        <taxon>Enterobacterales</taxon>
        <taxon>Yersiniaceae</taxon>
        <taxon>Yersinia</taxon>
    </lineage>
</organism>
<protein>
    <recommendedName>
        <fullName evidence="1">Inner membrane-spanning protein YciB</fullName>
    </recommendedName>
</protein>
<sequence>MKQLLDFLPLVVFFIFYKMYDIFVASGALIVATLVALAFTWLKYRKVEKMTLVTAAMVLVFGTLTLAFHSDLFIKWKVTVLYVLFALALLVSQWVMKKPLIQRMLGKELTLPDKVWSTLNLSWAIFFLVCGLLNIYVAFWLPQDIWVNFKVFGLTALTLIFTLISGVYIYRHMPEEQKKS</sequence>
<dbReference type="EMBL" id="CP001048">
    <property type="protein sequence ID" value="ACC89151.1"/>
    <property type="molecule type" value="Genomic_DNA"/>
</dbReference>
<dbReference type="RefSeq" id="WP_002210640.1">
    <property type="nucleotide sequence ID" value="NZ_CP009780.1"/>
</dbReference>
<dbReference type="KEGG" id="ypb:YPTS_2190"/>
<dbReference type="PATRIC" id="fig|502801.10.peg.1578"/>
<dbReference type="GO" id="GO:0005886">
    <property type="term" value="C:plasma membrane"/>
    <property type="evidence" value="ECO:0007669"/>
    <property type="project" value="UniProtKB-SubCell"/>
</dbReference>
<dbReference type="HAMAP" id="MF_00189">
    <property type="entry name" value="YciB"/>
    <property type="match status" value="1"/>
</dbReference>
<dbReference type="InterPro" id="IPR006008">
    <property type="entry name" value="YciB"/>
</dbReference>
<dbReference type="NCBIfam" id="TIGR00997">
    <property type="entry name" value="ispZ"/>
    <property type="match status" value="1"/>
</dbReference>
<dbReference type="NCBIfam" id="NF001324">
    <property type="entry name" value="PRK00259.1-2"/>
    <property type="match status" value="1"/>
</dbReference>
<dbReference type="NCBIfam" id="NF001325">
    <property type="entry name" value="PRK00259.1-3"/>
    <property type="match status" value="1"/>
</dbReference>
<dbReference type="NCBIfam" id="NF001326">
    <property type="entry name" value="PRK00259.1-4"/>
    <property type="match status" value="1"/>
</dbReference>
<dbReference type="PANTHER" id="PTHR36917:SF1">
    <property type="entry name" value="INNER MEMBRANE-SPANNING PROTEIN YCIB"/>
    <property type="match status" value="1"/>
</dbReference>
<dbReference type="PANTHER" id="PTHR36917">
    <property type="entry name" value="INTRACELLULAR SEPTATION PROTEIN A-RELATED"/>
    <property type="match status" value="1"/>
</dbReference>
<dbReference type="Pfam" id="PF04279">
    <property type="entry name" value="IspA"/>
    <property type="match status" value="1"/>
</dbReference>
<accession>B2K3V5</accession>
<name>YCIB_YERPB</name>